<reference key="1">
    <citation type="journal article" date="2006" name="BMC Evol. Biol.">
        <title>Complete plastid genome sequences of Drimys, Liriodendron, and Piper: implications for the phylogenetic relationships of magnoliids.</title>
        <authorList>
            <person name="Cai Z."/>
            <person name="Penaflor C."/>
            <person name="Kuehl J.V."/>
            <person name="Leebens-Mack J."/>
            <person name="Carlson J.E."/>
            <person name="dePamphilis C.W."/>
            <person name="Boore J.L."/>
            <person name="Jansen R.K."/>
        </authorList>
    </citation>
    <scope>NUCLEOTIDE SEQUENCE [LARGE SCALE GENOMIC DNA]</scope>
</reference>
<dbReference type="EC" id="7.1.1.-" evidence="1"/>
<dbReference type="EMBL" id="DQ887676">
    <property type="protein sequence ID" value="ABH88352.1"/>
    <property type="molecule type" value="Genomic_DNA"/>
</dbReference>
<dbReference type="RefSeq" id="YP_784441.1">
    <property type="nucleotide sequence ID" value="NC_008456.1"/>
</dbReference>
<dbReference type="SMR" id="Q06GU2"/>
<dbReference type="GeneID" id="4363562"/>
<dbReference type="GO" id="GO:0009535">
    <property type="term" value="C:chloroplast thylakoid membrane"/>
    <property type="evidence" value="ECO:0007669"/>
    <property type="project" value="UniProtKB-SubCell"/>
</dbReference>
<dbReference type="GO" id="GO:0051539">
    <property type="term" value="F:4 iron, 4 sulfur cluster binding"/>
    <property type="evidence" value="ECO:0007669"/>
    <property type="project" value="UniProtKB-KW"/>
</dbReference>
<dbReference type="GO" id="GO:0005506">
    <property type="term" value="F:iron ion binding"/>
    <property type="evidence" value="ECO:0007669"/>
    <property type="project" value="UniProtKB-UniRule"/>
</dbReference>
<dbReference type="GO" id="GO:0008137">
    <property type="term" value="F:NADH dehydrogenase (ubiquinone) activity"/>
    <property type="evidence" value="ECO:0007669"/>
    <property type="project" value="InterPro"/>
</dbReference>
<dbReference type="GO" id="GO:0048038">
    <property type="term" value="F:quinone binding"/>
    <property type="evidence" value="ECO:0007669"/>
    <property type="project" value="UniProtKB-KW"/>
</dbReference>
<dbReference type="GO" id="GO:0019684">
    <property type="term" value="P:photosynthesis, light reaction"/>
    <property type="evidence" value="ECO:0007669"/>
    <property type="project" value="UniProtKB-UniRule"/>
</dbReference>
<dbReference type="FunFam" id="3.30.70.3270:FF:000006">
    <property type="entry name" value="NAD(P)H-quinone oxidoreductase subunit I, chloroplastic"/>
    <property type="match status" value="1"/>
</dbReference>
<dbReference type="Gene3D" id="3.30.70.3270">
    <property type="match status" value="1"/>
</dbReference>
<dbReference type="HAMAP" id="MF_01351">
    <property type="entry name" value="NDH1_NuoI"/>
    <property type="match status" value="1"/>
</dbReference>
<dbReference type="InterPro" id="IPR017896">
    <property type="entry name" value="4Fe4S_Fe-S-bd"/>
</dbReference>
<dbReference type="InterPro" id="IPR017900">
    <property type="entry name" value="4Fe4S_Fe_S_CS"/>
</dbReference>
<dbReference type="InterPro" id="IPR010226">
    <property type="entry name" value="NADH_quinone_OxRdtase_chainI"/>
</dbReference>
<dbReference type="InterPro" id="IPR004497">
    <property type="entry name" value="NDHI"/>
</dbReference>
<dbReference type="NCBIfam" id="TIGR00403">
    <property type="entry name" value="ndhI"/>
    <property type="match status" value="1"/>
</dbReference>
<dbReference type="NCBIfam" id="TIGR01971">
    <property type="entry name" value="NuoI"/>
    <property type="match status" value="1"/>
</dbReference>
<dbReference type="NCBIfam" id="NF004537">
    <property type="entry name" value="PRK05888.1-3"/>
    <property type="match status" value="1"/>
</dbReference>
<dbReference type="PANTHER" id="PTHR47275">
    <property type="entry name" value="NAD(P)H-QUINONE OXIDOREDUCTASE SUBUNIT I, CHLOROPLASTIC"/>
    <property type="match status" value="1"/>
</dbReference>
<dbReference type="PANTHER" id="PTHR47275:SF1">
    <property type="entry name" value="NAD(P)H-QUINONE OXIDOREDUCTASE SUBUNIT I, CHLOROPLASTIC"/>
    <property type="match status" value="1"/>
</dbReference>
<dbReference type="Pfam" id="PF00037">
    <property type="entry name" value="Fer4"/>
    <property type="match status" value="2"/>
</dbReference>
<dbReference type="SUPFAM" id="SSF54862">
    <property type="entry name" value="4Fe-4S ferredoxins"/>
    <property type="match status" value="1"/>
</dbReference>
<dbReference type="PROSITE" id="PS00198">
    <property type="entry name" value="4FE4S_FER_1"/>
    <property type="match status" value="2"/>
</dbReference>
<dbReference type="PROSITE" id="PS51379">
    <property type="entry name" value="4FE4S_FER_2"/>
    <property type="match status" value="2"/>
</dbReference>
<evidence type="ECO:0000255" key="1">
    <source>
        <dbReference type="HAMAP-Rule" id="MF_01351"/>
    </source>
</evidence>
<proteinExistence type="inferred from homology"/>
<accession>Q06GU2</accession>
<protein>
    <recommendedName>
        <fullName evidence="1">NAD(P)H-quinone oxidoreductase subunit I, chloroplastic</fullName>
        <ecNumber evidence="1">7.1.1.-</ecNumber>
    </recommendedName>
    <alternativeName>
        <fullName evidence="1">NAD(P)H dehydrogenase subunit I</fullName>
        <shortName evidence="1">NDH subunit I</shortName>
    </alternativeName>
    <alternativeName>
        <fullName evidence="1">NADH-plastoquinone oxidoreductase subunit I</fullName>
    </alternativeName>
</protein>
<feature type="chain" id="PRO_0000275473" description="NAD(P)H-quinone oxidoreductase subunit I, chloroplastic">
    <location>
        <begin position="1"/>
        <end position="180"/>
    </location>
</feature>
<feature type="domain" description="4Fe-4S ferredoxin-type 1" evidence="1">
    <location>
        <begin position="55"/>
        <end position="84"/>
    </location>
</feature>
<feature type="domain" description="4Fe-4S ferredoxin-type 2" evidence="1">
    <location>
        <begin position="95"/>
        <end position="124"/>
    </location>
</feature>
<feature type="binding site" evidence="1">
    <location>
        <position position="64"/>
    </location>
    <ligand>
        <name>[4Fe-4S] cluster</name>
        <dbReference type="ChEBI" id="CHEBI:49883"/>
        <label>1</label>
    </ligand>
</feature>
<feature type="binding site" evidence="1">
    <location>
        <position position="67"/>
    </location>
    <ligand>
        <name>[4Fe-4S] cluster</name>
        <dbReference type="ChEBI" id="CHEBI:49883"/>
        <label>1</label>
    </ligand>
</feature>
<feature type="binding site" evidence="1">
    <location>
        <position position="70"/>
    </location>
    <ligand>
        <name>[4Fe-4S] cluster</name>
        <dbReference type="ChEBI" id="CHEBI:49883"/>
        <label>1</label>
    </ligand>
</feature>
<feature type="binding site" evidence="1">
    <location>
        <position position="74"/>
    </location>
    <ligand>
        <name>[4Fe-4S] cluster</name>
        <dbReference type="ChEBI" id="CHEBI:49883"/>
        <label>2</label>
    </ligand>
</feature>
<feature type="binding site" evidence="1">
    <location>
        <position position="104"/>
    </location>
    <ligand>
        <name>[4Fe-4S] cluster</name>
        <dbReference type="ChEBI" id="CHEBI:49883"/>
        <label>2</label>
    </ligand>
</feature>
<feature type="binding site" evidence="1">
    <location>
        <position position="107"/>
    </location>
    <ligand>
        <name>[4Fe-4S] cluster</name>
        <dbReference type="ChEBI" id="CHEBI:49883"/>
        <label>2</label>
    </ligand>
</feature>
<feature type="binding site" evidence="1">
    <location>
        <position position="110"/>
    </location>
    <ligand>
        <name>[4Fe-4S] cluster</name>
        <dbReference type="ChEBI" id="CHEBI:49883"/>
        <label>2</label>
    </ligand>
</feature>
<feature type="binding site" evidence="1">
    <location>
        <position position="114"/>
    </location>
    <ligand>
        <name>[4Fe-4S] cluster</name>
        <dbReference type="ChEBI" id="CHEBI:49883"/>
        <label>1</label>
    </ligand>
</feature>
<gene>
    <name evidence="1" type="primary">ndhI</name>
</gene>
<geneLocation type="chloroplast"/>
<keyword id="KW-0004">4Fe-4S</keyword>
<keyword id="KW-0150">Chloroplast</keyword>
<keyword id="KW-0408">Iron</keyword>
<keyword id="KW-0411">Iron-sulfur</keyword>
<keyword id="KW-0472">Membrane</keyword>
<keyword id="KW-0479">Metal-binding</keyword>
<keyword id="KW-0520">NAD</keyword>
<keyword id="KW-0521">NADP</keyword>
<keyword id="KW-0934">Plastid</keyword>
<keyword id="KW-0618">Plastoquinone</keyword>
<keyword id="KW-0874">Quinone</keyword>
<keyword id="KW-0677">Repeat</keyword>
<keyword id="KW-0793">Thylakoid</keyword>
<keyword id="KW-1278">Translocase</keyword>
<organism>
    <name type="scientific">Drimys granadensis</name>
    <dbReference type="NCBI Taxonomy" id="224735"/>
    <lineage>
        <taxon>Eukaryota</taxon>
        <taxon>Viridiplantae</taxon>
        <taxon>Streptophyta</taxon>
        <taxon>Embryophyta</taxon>
        <taxon>Tracheophyta</taxon>
        <taxon>Spermatophyta</taxon>
        <taxon>Magnoliopsida</taxon>
        <taxon>Magnoliidae</taxon>
        <taxon>Canellales</taxon>
        <taxon>Winteraceae</taxon>
        <taxon>Drimys</taxon>
    </lineage>
</organism>
<name>NDHI_DRIGR</name>
<sequence>MFPMMTGFMNYGQQTVRAARYIGQSFMITLSHANRLPVTIQYPYEKSITSERFRGRIHFEFDKCIACEVCVRVCPIDLPVVDWRLETDIRKKRLLNYSIDFGICIFCGNCVEYCPTNCLSMTEEYELSIYDRHELNYNQIALGRLPMSVIGDYTIRTIMNSTQIKITTDKPLDSITITND</sequence>
<comment type="function">
    <text evidence="1">NDH shuttles electrons from NAD(P)H:plastoquinone, via FMN and iron-sulfur (Fe-S) centers, to quinones in the photosynthetic chain and possibly in a chloroplast respiratory chain. The immediate electron acceptor for the enzyme in this species is believed to be plastoquinone. Couples the redox reaction to proton translocation, and thus conserves the redox energy in a proton gradient.</text>
</comment>
<comment type="catalytic activity">
    <reaction evidence="1">
        <text>a plastoquinone + NADH + (n+1) H(+)(in) = a plastoquinol + NAD(+) + n H(+)(out)</text>
        <dbReference type="Rhea" id="RHEA:42608"/>
        <dbReference type="Rhea" id="RHEA-COMP:9561"/>
        <dbReference type="Rhea" id="RHEA-COMP:9562"/>
        <dbReference type="ChEBI" id="CHEBI:15378"/>
        <dbReference type="ChEBI" id="CHEBI:17757"/>
        <dbReference type="ChEBI" id="CHEBI:57540"/>
        <dbReference type="ChEBI" id="CHEBI:57945"/>
        <dbReference type="ChEBI" id="CHEBI:62192"/>
    </reaction>
</comment>
<comment type="catalytic activity">
    <reaction evidence="1">
        <text>a plastoquinone + NADPH + (n+1) H(+)(in) = a plastoquinol + NADP(+) + n H(+)(out)</text>
        <dbReference type="Rhea" id="RHEA:42612"/>
        <dbReference type="Rhea" id="RHEA-COMP:9561"/>
        <dbReference type="Rhea" id="RHEA-COMP:9562"/>
        <dbReference type="ChEBI" id="CHEBI:15378"/>
        <dbReference type="ChEBI" id="CHEBI:17757"/>
        <dbReference type="ChEBI" id="CHEBI:57783"/>
        <dbReference type="ChEBI" id="CHEBI:58349"/>
        <dbReference type="ChEBI" id="CHEBI:62192"/>
    </reaction>
</comment>
<comment type="cofactor">
    <cofactor evidence="1">
        <name>[4Fe-4S] cluster</name>
        <dbReference type="ChEBI" id="CHEBI:49883"/>
    </cofactor>
    <text evidence="1">Binds 2 [4Fe-4S] clusters per subunit.</text>
</comment>
<comment type="subunit">
    <text evidence="1">NDH is composed of at least 16 different subunits, 5 of which are encoded in the nucleus.</text>
</comment>
<comment type="subcellular location">
    <subcellularLocation>
        <location evidence="1">Plastid</location>
        <location evidence="1">Chloroplast thylakoid membrane</location>
        <topology evidence="1">Peripheral membrane protein</topology>
    </subcellularLocation>
</comment>
<comment type="similarity">
    <text evidence="1">Belongs to the complex I 23 kDa subunit family.</text>
</comment>